<feature type="chain" id="PRO_0000230347" description="Small ribosomal subunit protein uS5">
    <location>
        <begin position="1"/>
        <end position="166"/>
    </location>
</feature>
<feature type="domain" description="S5 DRBM" evidence="1">
    <location>
        <begin position="11"/>
        <end position="74"/>
    </location>
</feature>
<gene>
    <name evidence="1" type="primary">rpsE</name>
    <name type="ordered locus">NTHI0958</name>
</gene>
<organism>
    <name type="scientific">Haemophilus influenzae (strain 86-028NP)</name>
    <dbReference type="NCBI Taxonomy" id="281310"/>
    <lineage>
        <taxon>Bacteria</taxon>
        <taxon>Pseudomonadati</taxon>
        <taxon>Pseudomonadota</taxon>
        <taxon>Gammaproteobacteria</taxon>
        <taxon>Pasteurellales</taxon>
        <taxon>Pasteurellaceae</taxon>
        <taxon>Haemophilus</taxon>
    </lineage>
</organism>
<proteinExistence type="inferred from homology"/>
<name>RS5_HAEI8</name>
<dbReference type="EMBL" id="CP000057">
    <property type="protein sequence ID" value="AAX87843.1"/>
    <property type="molecule type" value="Genomic_DNA"/>
</dbReference>
<dbReference type="RefSeq" id="WP_005625871.1">
    <property type="nucleotide sequence ID" value="NC_007146.2"/>
</dbReference>
<dbReference type="SMR" id="Q4QMA4"/>
<dbReference type="GeneID" id="93219835"/>
<dbReference type="KEGG" id="hit:NTHI0958"/>
<dbReference type="HOGENOM" id="CLU_065898_2_2_6"/>
<dbReference type="Proteomes" id="UP000002525">
    <property type="component" value="Chromosome"/>
</dbReference>
<dbReference type="GO" id="GO:0015935">
    <property type="term" value="C:small ribosomal subunit"/>
    <property type="evidence" value="ECO:0007669"/>
    <property type="project" value="InterPro"/>
</dbReference>
<dbReference type="GO" id="GO:0019843">
    <property type="term" value="F:rRNA binding"/>
    <property type="evidence" value="ECO:0007669"/>
    <property type="project" value="UniProtKB-UniRule"/>
</dbReference>
<dbReference type="GO" id="GO:0003735">
    <property type="term" value="F:structural constituent of ribosome"/>
    <property type="evidence" value="ECO:0007669"/>
    <property type="project" value="InterPro"/>
</dbReference>
<dbReference type="GO" id="GO:0006412">
    <property type="term" value="P:translation"/>
    <property type="evidence" value="ECO:0007669"/>
    <property type="project" value="UniProtKB-UniRule"/>
</dbReference>
<dbReference type="FunFam" id="3.30.160.20:FF:000001">
    <property type="entry name" value="30S ribosomal protein S5"/>
    <property type="match status" value="1"/>
</dbReference>
<dbReference type="FunFam" id="3.30.230.10:FF:000002">
    <property type="entry name" value="30S ribosomal protein S5"/>
    <property type="match status" value="1"/>
</dbReference>
<dbReference type="Gene3D" id="3.30.160.20">
    <property type="match status" value="1"/>
</dbReference>
<dbReference type="Gene3D" id="3.30.230.10">
    <property type="match status" value="1"/>
</dbReference>
<dbReference type="HAMAP" id="MF_01307_B">
    <property type="entry name" value="Ribosomal_uS5_B"/>
    <property type="match status" value="1"/>
</dbReference>
<dbReference type="InterPro" id="IPR020568">
    <property type="entry name" value="Ribosomal_Su5_D2-typ_SF"/>
</dbReference>
<dbReference type="InterPro" id="IPR000851">
    <property type="entry name" value="Ribosomal_uS5"/>
</dbReference>
<dbReference type="InterPro" id="IPR005712">
    <property type="entry name" value="Ribosomal_uS5_bac-type"/>
</dbReference>
<dbReference type="InterPro" id="IPR005324">
    <property type="entry name" value="Ribosomal_uS5_C"/>
</dbReference>
<dbReference type="InterPro" id="IPR013810">
    <property type="entry name" value="Ribosomal_uS5_N"/>
</dbReference>
<dbReference type="InterPro" id="IPR018192">
    <property type="entry name" value="Ribosomal_uS5_N_CS"/>
</dbReference>
<dbReference type="InterPro" id="IPR014721">
    <property type="entry name" value="Ribsml_uS5_D2-typ_fold_subgr"/>
</dbReference>
<dbReference type="NCBIfam" id="TIGR01021">
    <property type="entry name" value="rpsE_bact"/>
    <property type="match status" value="1"/>
</dbReference>
<dbReference type="PANTHER" id="PTHR48277">
    <property type="entry name" value="MITOCHONDRIAL RIBOSOMAL PROTEIN S5"/>
    <property type="match status" value="1"/>
</dbReference>
<dbReference type="PANTHER" id="PTHR48277:SF1">
    <property type="entry name" value="MITOCHONDRIAL RIBOSOMAL PROTEIN S5"/>
    <property type="match status" value="1"/>
</dbReference>
<dbReference type="Pfam" id="PF00333">
    <property type="entry name" value="Ribosomal_S5"/>
    <property type="match status" value="1"/>
</dbReference>
<dbReference type="Pfam" id="PF03719">
    <property type="entry name" value="Ribosomal_S5_C"/>
    <property type="match status" value="1"/>
</dbReference>
<dbReference type="SUPFAM" id="SSF54768">
    <property type="entry name" value="dsRNA-binding domain-like"/>
    <property type="match status" value="1"/>
</dbReference>
<dbReference type="SUPFAM" id="SSF54211">
    <property type="entry name" value="Ribosomal protein S5 domain 2-like"/>
    <property type="match status" value="1"/>
</dbReference>
<dbReference type="PROSITE" id="PS00585">
    <property type="entry name" value="RIBOSOMAL_S5"/>
    <property type="match status" value="1"/>
</dbReference>
<dbReference type="PROSITE" id="PS50881">
    <property type="entry name" value="S5_DSRBD"/>
    <property type="match status" value="1"/>
</dbReference>
<sequence>MSNIEKQVGELQEKLIAVNRVSKTVKGGRIMSFTALTVVGDGNGRVGFGYGKAREVPAAIQKAMEKARRNMINVALNEGTLQHPVKGVHTGSRVFMQPASEGTGIIAGGAMRAVLEVAGVRNVLSKAYGSTNPINVVRATIDALANMKSPEMVAAKRGKTVDEILG</sequence>
<accession>Q4QMA4</accession>
<protein>
    <recommendedName>
        <fullName evidence="1">Small ribosomal subunit protein uS5</fullName>
    </recommendedName>
    <alternativeName>
        <fullName evidence="2">30S ribosomal protein S5</fullName>
    </alternativeName>
</protein>
<keyword id="KW-0687">Ribonucleoprotein</keyword>
<keyword id="KW-0689">Ribosomal protein</keyword>
<keyword id="KW-0694">RNA-binding</keyword>
<keyword id="KW-0699">rRNA-binding</keyword>
<comment type="function">
    <text evidence="1">With S4 and S12 plays an important role in translational accuracy.</text>
</comment>
<comment type="function">
    <text evidence="1">Located at the back of the 30S subunit body where it stabilizes the conformation of the head with respect to the body.</text>
</comment>
<comment type="subunit">
    <text evidence="1">Part of the 30S ribosomal subunit. Contacts proteins S4 and S8.</text>
</comment>
<comment type="domain">
    <text>The N-terminal domain interacts with the head of the 30S subunit; the C-terminal domain interacts with the body and contacts protein S4. The interaction surface between S4 and S5 is involved in control of translational fidelity.</text>
</comment>
<comment type="similarity">
    <text evidence="1">Belongs to the universal ribosomal protein uS5 family.</text>
</comment>
<evidence type="ECO:0000255" key="1">
    <source>
        <dbReference type="HAMAP-Rule" id="MF_01307"/>
    </source>
</evidence>
<evidence type="ECO:0000305" key="2"/>
<reference key="1">
    <citation type="journal article" date="2005" name="J. Bacteriol.">
        <title>Genomic sequence of an otitis media isolate of nontypeable Haemophilus influenzae: comparative study with H. influenzae serotype d, strain KW20.</title>
        <authorList>
            <person name="Harrison A."/>
            <person name="Dyer D.W."/>
            <person name="Gillaspy A."/>
            <person name="Ray W.C."/>
            <person name="Mungur R."/>
            <person name="Carson M.B."/>
            <person name="Zhong H."/>
            <person name="Gipson J."/>
            <person name="Gipson M."/>
            <person name="Johnson L.S."/>
            <person name="Lewis L."/>
            <person name="Bakaletz L.O."/>
            <person name="Munson R.S. Jr."/>
        </authorList>
    </citation>
    <scope>NUCLEOTIDE SEQUENCE [LARGE SCALE GENOMIC DNA]</scope>
    <source>
        <strain>86-028NP</strain>
    </source>
</reference>